<evidence type="ECO:0000255" key="1">
    <source>
        <dbReference type="HAMAP-Rule" id="MF_00278"/>
    </source>
</evidence>
<proteinExistence type="inferred from homology"/>
<dbReference type="EC" id="4.3.2.10" evidence="1"/>
<dbReference type="EC" id="3.5.1.2" evidence="1"/>
<dbReference type="EMBL" id="AP008231">
    <property type="protein sequence ID" value="BAD80657.1"/>
    <property type="molecule type" value="Genomic_DNA"/>
</dbReference>
<dbReference type="RefSeq" id="WP_011244777.1">
    <property type="nucleotide sequence ID" value="NZ_CP085785.1"/>
</dbReference>
<dbReference type="SMR" id="Q5MZ63"/>
<dbReference type="GeneID" id="72430486"/>
<dbReference type="KEGG" id="syc:syc2467_c"/>
<dbReference type="eggNOG" id="COG0118">
    <property type="taxonomic scope" value="Bacteria"/>
</dbReference>
<dbReference type="UniPathway" id="UPA00031">
    <property type="reaction ID" value="UER00010"/>
</dbReference>
<dbReference type="Proteomes" id="UP000001175">
    <property type="component" value="Chromosome"/>
</dbReference>
<dbReference type="GO" id="GO:0005737">
    <property type="term" value="C:cytoplasm"/>
    <property type="evidence" value="ECO:0007669"/>
    <property type="project" value="UniProtKB-SubCell"/>
</dbReference>
<dbReference type="GO" id="GO:0004359">
    <property type="term" value="F:glutaminase activity"/>
    <property type="evidence" value="ECO:0007669"/>
    <property type="project" value="UniProtKB-EC"/>
</dbReference>
<dbReference type="GO" id="GO:0000107">
    <property type="term" value="F:imidazoleglycerol-phosphate synthase activity"/>
    <property type="evidence" value="ECO:0007669"/>
    <property type="project" value="UniProtKB-UniRule"/>
</dbReference>
<dbReference type="GO" id="GO:0016829">
    <property type="term" value="F:lyase activity"/>
    <property type="evidence" value="ECO:0007669"/>
    <property type="project" value="UniProtKB-KW"/>
</dbReference>
<dbReference type="GO" id="GO:0000105">
    <property type="term" value="P:L-histidine biosynthetic process"/>
    <property type="evidence" value="ECO:0007669"/>
    <property type="project" value="UniProtKB-UniRule"/>
</dbReference>
<dbReference type="CDD" id="cd01748">
    <property type="entry name" value="GATase1_IGP_Synthase"/>
    <property type="match status" value="1"/>
</dbReference>
<dbReference type="FunFam" id="3.40.50.880:FF:000009">
    <property type="entry name" value="Imidazole glycerol phosphate synthase subunit HisH"/>
    <property type="match status" value="1"/>
</dbReference>
<dbReference type="Gene3D" id="3.40.50.880">
    <property type="match status" value="1"/>
</dbReference>
<dbReference type="HAMAP" id="MF_00278">
    <property type="entry name" value="HisH"/>
    <property type="match status" value="1"/>
</dbReference>
<dbReference type="InterPro" id="IPR029062">
    <property type="entry name" value="Class_I_gatase-like"/>
</dbReference>
<dbReference type="InterPro" id="IPR017926">
    <property type="entry name" value="GATASE"/>
</dbReference>
<dbReference type="InterPro" id="IPR010139">
    <property type="entry name" value="Imidazole-glycPsynth_HisH"/>
</dbReference>
<dbReference type="NCBIfam" id="TIGR01855">
    <property type="entry name" value="IMP_synth_hisH"/>
    <property type="match status" value="1"/>
</dbReference>
<dbReference type="PANTHER" id="PTHR42701">
    <property type="entry name" value="IMIDAZOLE GLYCEROL PHOSPHATE SYNTHASE SUBUNIT HISH"/>
    <property type="match status" value="1"/>
</dbReference>
<dbReference type="PANTHER" id="PTHR42701:SF1">
    <property type="entry name" value="IMIDAZOLE GLYCEROL PHOSPHATE SYNTHASE SUBUNIT HISH"/>
    <property type="match status" value="1"/>
</dbReference>
<dbReference type="Pfam" id="PF00117">
    <property type="entry name" value="GATase"/>
    <property type="match status" value="1"/>
</dbReference>
<dbReference type="PIRSF" id="PIRSF000495">
    <property type="entry name" value="Amidotransf_hisH"/>
    <property type="match status" value="1"/>
</dbReference>
<dbReference type="SUPFAM" id="SSF52317">
    <property type="entry name" value="Class I glutamine amidotransferase-like"/>
    <property type="match status" value="1"/>
</dbReference>
<dbReference type="PROSITE" id="PS51273">
    <property type="entry name" value="GATASE_TYPE_1"/>
    <property type="match status" value="1"/>
</dbReference>
<protein>
    <recommendedName>
        <fullName evidence="1">Imidazole glycerol phosphate synthase subunit HisH</fullName>
        <ecNumber evidence="1">4.3.2.10</ecNumber>
    </recommendedName>
    <alternativeName>
        <fullName evidence="1">IGP synthase glutaminase subunit</fullName>
        <ecNumber evidence="1">3.5.1.2</ecNumber>
    </alternativeName>
    <alternativeName>
        <fullName evidence="1">IGP synthase subunit HisH</fullName>
    </alternativeName>
    <alternativeName>
        <fullName evidence="1">ImGP synthase subunit HisH</fullName>
        <shortName evidence="1">IGPS subunit HisH</shortName>
    </alternativeName>
</protein>
<feature type="chain" id="PRO_0000231764" description="Imidazole glycerol phosphate synthase subunit HisH">
    <location>
        <begin position="1"/>
        <end position="217"/>
    </location>
</feature>
<feature type="domain" description="Glutamine amidotransferase type-1" evidence="1">
    <location>
        <begin position="6"/>
        <end position="214"/>
    </location>
</feature>
<feature type="active site" description="Nucleophile" evidence="1">
    <location>
        <position position="84"/>
    </location>
</feature>
<feature type="active site" evidence="1">
    <location>
        <position position="189"/>
    </location>
</feature>
<feature type="active site" evidence="1">
    <location>
        <position position="191"/>
    </location>
</feature>
<gene>
    <name evidence="1" type="primary">hisH</name>
    <name type="ordered locus">syc2467_c</name>
</gene>
<comment type="function">
    <text evidence="1">IGPS catalyzes the conversion of PRFAR and glutamine to IGP, AICAR and glutamate. The HisH subunit catalyzes the hydrolysis of glutamine to glutamate and ammonia as part of the synthesis of IGP and AICAR. The resulting ammonia molecule is channeled to the active site of HisF.</text>
</comment>
<comment type="catalytic activity">
    <reaction evidence="1">
        <text>5-[(5-phospho-1-deoxy-D-ribulos-1-ylimino)methylamino]-1-(5-phospho-beta-D-ribosyl)imidazole-4-carboxamide + L-glutamine = D-erythro-1-(imidazol-4-yl)glycerol 3-phosphate + 5-amino-1-(5-phospho-beta-D-ribosyl)imidazole-4-carboxamide + L-glutamate + H(+)</text>
        <dbReference type="Rhea" id="RHEA:24793"/>
        <dbReference type="ChEBI" id="CHEBI:15378"/>
        <dbReference type="ChEBI" id="CHEBI:29985"/>
        <dbReference type="ChEBI" id="CHEBI:58278"/>
        <dbReference type="ChEBI" id="CHEBI:58359"/>
        <dbReference type="ChEBI" id="CHEBI:58475"/>
        <dbReference type="ChEBI" id="CHEBI:58525"/>
        <dbReference type="EC" id="4.3.2.10"/>
    </reaction>
</comment>
<comment type="catalytic activity">
    <reaction evidence="1">
        <text>L-glutamine + H2O = L-glutamate + NH4(+)</text>
        <dbReference type="Rhea" id="RHEA:15889"/>
        <dbReference type="ChEBI" id="CHEBI:15377"/>
        <dbReference type="ChEBI" id="CHEBI:28938"/>
        <dbReference type="ChEBI" id="CHEBI:29985"/>
        <dbReference type="ChEBI" id="CHEBI:58359"/>
        <dbReference type="EC" id="3.5.1.2"/>
    </reaction>
</comment>
<comment type="pathway">
    <text evidence="1">Amino-acid biosynthesis; L-histidine biosynthesis; L-histidine from 5-phospho-alpha-D-ribose 1-diphosphate: step 5/9.</text>
</comment>
<comment type="subunit">
    <text evidence="1">Heterodimer of HisH and HisF.</text>
</comment>
<comment type="subcellular location">
    <subcellularLocation>
        <location evidence="1">Cytoplasm</location>
    </subcellularLocation>
</comment>
<keyword id="KW-0028">Amino-acid biosynthesis</keyword>
<keyword id="KW-0963">Cytoplasm</keyword>
<keyword id="KW-0315">Glutamine amidotransferase</keyword>
<keyword id="KW-0368">Histidine biosynthesis</keyword>
<keyword id="KW-0378">Hydrolase</keyword>
<keyword id="KW-0456">Lyase</keyword>
<accession>Q5MZ63</accession>
<reference key="1">
    <citation type="journal article" date="2007" name="Photosyn. Res.">
        <title>Complete nucleotide sequence of the freshwater unicellular cyanobacterium Synechococcus elongatus PCC 6301 chromosome: gene content and organization.</title>
        <authorList>
            <person name="Sugita C."/>
            <person name="Ogata K."/>
            <person name="Shikata M."/>
            <person name="Jikuya H."/>
            <person name="Takano J."/>
            <person name="Furumichi M."/>
            <person name="Kanehisa M."/>
            <person name="Omata T."/>
            <person name="Sugiura M."/>
            <person name="Sugita M."/>
        </authorList>
    </citation>
    <scope>NUCLEOTIDE SEQUENCE [LARGE SCALE GENOMIC DNA]</scope>
    <source>
        <strain>ATCC 27144 / PCC 6301 / SAUG 1402/1</strain>
    </source>
</reference>
<sequence>MASTPQIAVVDYDMGNLHSACKGLEAAGANPIVTADPATILAADGVLLPGVGAFDPAMDHLRDRQLIEPLHQAATSGKPFLGICLGLQLLFEASEEGQSAGLGILPGRVQRFRSEPGLVIPHMGWNQLQLQQPDCPLWQNLGADPWFYFVHTYYVVPSEPTLTAATVQHGSQPVTAAIARDRLWAVQFHPEKSAKAGLQLLANFVTQVAAAQLQTVA</sequence>
<name>HIS5_SYNP6</name>
<organism>
    <name type="scientific">Synechococcus sp. (strain ATCC 27144 / PCC 6301 / SAUG 1402/1)</name>
    <name type="common">Anacystis nidulans</name>
    <dbReference type="NCBI Taxonomy" id="269084"/>
    <lineage>
        <taxon>Bacteria</taxon>
        <taxon>Bacillati</taxon>
        <taxon>Cyanobacteriota</taxon>
        <taxon>Cyanophyceae</taxon>
        <taxon>Synechococcales</taxon>
        <taxon>Synechococcaceae</taxon>
        <taxon>Synechococcus</taxon>
    </lineage>
</organism>